<sequence length="383" mass="42912">MLISNTYNQHFPQLTQEQLARNATKKVICGMSGGVDSSVSAFILQQQGYQVEGLFMKNWEEDDDTDYCTAAADLADAQAVCDKLGIKLHKINFAAEYWDNVFEHFLTEYKAGRTPNPDILCNKEIKFKAFLEYAAEDLGADYIATGHYVRRAGDNENAKLLRGLDANKDQSYFLYTLSHKQVGQSLFPVGEIEKPIVRAIAEDLGLITAKKKDSTGICFIGERKFKDFLARYLPAQPGNIRTVDDEIIGRHDGLMYHTLGQRKGLGIGGLKNAGDEAWYVVDKDVENNELIVAQGHDHPRLFSKGLIASQLHWVDREPIRESLRCTVKTRYRQQDIPCVIEPIDDETIRVIFDEPQSAVTPGQSAVFYLGEVCLGGGIIAERI</sequence>
<gene>
    <name evidence="1" type="primary">mnmA</name>
    <name type="ordered locus">NTHI0262</name>
</gene>
<reference key="1">
    <citation type="journal article" date="2005" name="J. Bacteriol.">
        <title>Genomic sequence of an otitis media isolate of nontypeable Haemophilus influenzae: comparative study with H. influenzae serotype d, strain KW20.</title>
        <authorList>
            <person name="Harrison A."/>
            <person name="Dyer D.W."/>
            <person name="Gillaspy A."/>
            <person name="Ray W.C."/>
            <person name="Mungur R."/>
            <person name="Carson M.B."/>
            <person name="Zhong H."/>
            <person name="Gipson J."/>
            <person name="Gipson M."/>
            <person name="Johnson L.S."/>
            <person name="Lewis L."/>
            <person name="Bakaletz L.O."/>
            <person name="Munson R.S. Jr."/>
        </authorList>
    </citation>
    <scope>NUCLEOTIDE SEQUENCE [LARGE SCALE GENOMIC DNA]</scope>
    <source>
        <strain>86-028NP</strain>
    </source>
</reference>
<feature type="chain" id="PRO_0000349653" description="tRNA-specific 2-thiouridylase MnmA">
    <location>
        <begin position="1"/>
        <end position="383"/>
    </location>
</feature>
<feature type="region of interest" description="Interaction with target base in tRNA" evidence="1">
    <location>
        <begin position="116"/>
        <end position="118"/>
    </location>
</feature>
<feature type="region of interest" description="Interaction with tRNA" evidence="1">
    <location>
        <begin position="168"/>
        <end position="170"/>
    </location>
</feature>
<feature type="region of interest" description="Interaction with tRNA" evidence="1">
    <location>
        <begin position="330"/>
        <end position="331"/>
    </location>
</feature>
<feature type="active site" description="Nucleophile" evidence="1">
    <location>
        <position position="121"/>
    </location>
</feature>
<feature type="active site" description="Cysteine persulfide intermediate" evidence="1">
    <location>
        <position position="218"/>
    </location>
</feature>
<feature type="binding site" evidence="1">
    <location>
        <begin position="30"/>
        <end position="37"/>
    </location>
    <ligand>
        <name>ATP</name>
        <dbReference type="ChEBI" id="CHEBI:30616"/>
    </ligand>
</feature>
<feature type="binding site" evidence="1">
    <location>
        <position position="56"/>
    </location>
    <ligand>
        <name>ATP</name>
        <dbReference type="ChEBI" id="CHEBI:30616"/>
    </ligand>
</feature>
<feature type="binding site" evidence="1">
    <location>
        <position position="146"/>
    </location>
    <ligand>
        <name>ATP</name>
        <dbReference type="ChEBI" id="CHEBI:30616"/>
    </ligand>
</feature>
<feature type="site" description="Interaction with tRNA" evidence="1">
    <location>
        <position position="147"/>
    </location>
</feature>
<feature type="site" description="Interaction with tRNA" evidence="1">
    <location>
        <position position="363"/>
    </location>
</feature>
<feature type="disulfide bond" description="Alternate" evidence="1">
    <location>
        <begin position="121"/>
        <end position="218"/>
    </location>
</feature>
<protein>
    <recommendedName>
        <fullName evidence="1">tRNA-specific 2-thiouridylase MnmA</fullName>
        <ecNumber evidence="1">2.8.1.13</ecNumber>
    </recommendedName>
</protein>
<evidence type="ECO:0000255" key="1">
    <source>
        <dbReference type="HAMAP-Rule" id="MF_00144"/>
    </source>
</evidence>
<evidence type="ECO:0000305" key="2"/>
<name>MNMA_HAEI8</name>
<keyword id="KW-0067">ATP-binding</keyword>
<keyword id="KW-0963">Cytoplasm</keyword>
<keyword id="KW-1015">Disulfide bond</keyword>
<keyword id="KW-0547">Nucleotide-binding</keyword>
<keyword id="KW-0694">RNA-binding</keyword>
<keyword id="KW-0808">Transferase</keyword>
<keyword id="KW-0819">tRNA processing</keyword>
<keyword id="KW-0820">tRNA-binding</keyword>
<dbReference type="EC" id="2.8.1.13" evidence="1"/>
<dbReference type="EMBL" id="CP000057">
    <property type="protein sequence ID" value="AAX87231.1"/>
    <property type="status" value="ALT_INIT"/>
    <property type="molecule type" value="Genomic_DNA"/>
</dbReference>
<dbReference type="RefSeq" id="WP_005660840.1">
    <property type="nucleotide sequence ID" value="NC_007146.2"/>
</dbReference>
<dbReference type="SMR" id="Q4QP16"/>
<dbReference type="GeneID" id="93219109"/>
<dbReference type="KEGG" id="hit:NTHI0262"/>
<dbReference type="HOGENOM" id="CLU_035188_1_0_6"/>
<dbReference type="Proteomes" id="UP000002525">
    <property type="component" value="Chromosome"/>
</dbReference>
<dbReference type="GO" id="GO:0005737">
    <property type="term" value="C:cytoplasm"/>
    <property type="evidence" value="ECO:0007669"/>
    <property type="project" value="UniProtKB-SubCell"/>
</dbReference>
<dbReference type="GO" id="GO:0005524">
    <property type="term" value="F:ATP binding"/>
    <property type="evidence" value="ECO:0007669"/>
    <property type="project" value="UniProtKB-KW"/>
</dbReference>
<dbReference type="GO" id="GO:0000049">
    <property type="term" value="F:tRNA binding"/>
    <property type="evidence" value="ECO:0007669"/>
    <property type="project" value="UniProtKB-KW"/>
</dbReference>
<dbReference type="GO" id="GO:0103016">
    <property type="term" value="F:tRNA-uridine 2-sulfurtransferase activity"/>
    <property type="evidence" value="ECO:0007669"/>
    <property type="project" value="UniProtKB-EC"/>
</dbReference>
<dbReference type="GO" id="GO:0002143">
    <property type="term" value="P:tRNA wobble position uridine thiolation"/>
    <property type="evidence" value="ECO:0007669"/>
    <property type="project" value="TreeGrafter"/>
</dbReference>
<dbReference type="CDD" id="cd01998">
    <property type="entry name" value="MnmA_TRMU-like"/>
    <property type="match status" value="1"/>
</dbReference>
<dbReference type="FunFam" id="2.30.30.280:FF:000001">
    <property type="entry name" value="tRNA-specific 2-thiouridylase MnmA"/>
    <property type="match status" value="1"/>
</dbReference>
<dbReference type="FunFam" id="2.40.30.10:FF:000023">
    <property type="entry name" value="tRNA-specific 2-thiouridylase MnmA"/>
    <property type="match status" value="1"/>
</dbReference>
<dbReference type="FunFam" id="3.40.50.620:FF:000004">
    <property type="entry name" value="tRNA-specific 2-thiouridylase MnmA"/>
    <property type="match status" value="1"/>
</dbReference>
<dbReference type="Gene3D" id="2.30.30.280">
    <property type="entry name" value="Adenine nucleotide alpha hydrolases-like domains"/>
    <property type="match status" value="1"/>
</dbReference>
<dbReference type="Gene3D" id="3.40.50.620">
    <property type="entry name" value="HUPs"/>
    <property type="match status" value="1"/>
</dbReference>
<dbReference type="Gene3D" id="2.40.30.10">
    <property type="entry name" value="Translation factors"/>
    <property type="match status" value="1"/>
</dbReference>
<dbReference type="HAMAP" id="MF_00144">
    <property type="entry name" value="tRNA_thiouridyl_MnmA"/>
    <property type="match status" value="1"/>
</dbReference>
<dbReference type="InterPro" id="IPR004506">
    <property type="entry name" value="MnmA-like"/>
</dbReference>
<dbReference type="InterPro" id="IPR046885">
    <property type="entry name" value="MnmA-like_C"/>
</dbReference>
<dbReference type="InterPro" id="IPR046884">
    <property type="entry name" value="MnmA-like_central"/>
</dbReference>
<dbReference type="InterPro" id="IPR023382">
    <property type="entry name" value="MnmA-like_central_sf"/>
</dbReference>
<dbReference type="InterPro" id="IPR014729">
    <property type="entry name" value="Rossmann-like_a/b/a_fold"/>
</dbReference>
<dbReference type="NCBIfam" id="NF001138">
    <property type="entry name" value="PRK00143.1"/>
    <property type="match status" value="1"/>
</dbReference>
<dbReference type="NCBIfam" id="TIGR00420">
    <property type="entry name" value="trmU"/>
    <property type="match status" value="1"/>
</dbReference>
<dbReference type="PANTHER" id="PTHR11933:SF5">
    <property type="entry name" value="MITOCHONDRIAL TRNA-SPECIFIC 2-THIOURIDYLASE 1"/>
    <property type="match status" value="1"/>
</dbReference>
<dbReference type="PANTHER" id="PTHR11933">
    <property type="entry name" value="TRNA 5-METHYLAMINOMETHYL-2-THIOURIDYLATE -METHYLTRANSFERASE"/>
    <property type="match status" value="1"/>
</dbReference>
<dbReference type="Pfam" id="PF03054">
    <property type="entry name" value="tRNA_Me_trans"/>
    <property type="match status" value="1"/>
</dbReference>
<dbReference type="Pfam" id="PF20258">
    <property type="entry name" value="tRNA_Me_trans_C"/>
    <property type="match status" value="1"/>
</dbReference>
<dbReference type="Pfam" id="PF20259">
    <property type="entry name" value="tRNA_Me_trans_M"/>
    <property type="match status" value="1"/>
</dbReference>
<dbReference type="SUPFAM" id="SSF52402">
    <property type="entry name" value="Adenine nucleotide alpha hydrolases-like"/>
    <property type="match status" value="1"/>
</dbReference>
<accession>Q4QP16</accession>
<proteinExistence type="inferred from homology"/>
<organism>
    <name type="scientific">Haemophilus influenzae (strain 86-028NP)</name>
    <dbReference type="NCBI Taxonomy" id="281310"/>
    <lineage>
        <taxon>Bacteria</taxon>
        <taxon>Pseudomonadati</taxon>
        <taxon>Pseudomonadota</taxon>
        <taxon>Gammaproteobacteria</taxon>
        <taxon>Pasteurellales</taxon>
        <taxon>Pasteurellaceae</taxon>
        <taxon>Haemophilus</taxon>
    </lineage>
</organism>
<comment type="function">
    <text evidence="1">Catalyzes the 2-thiolation of uridine at the wobble position (U34) of tRNA, leading to the formation of s(2)U34.</text>
</comment>
<comment type="catalytic activity">
    <reaction evidence="1">
        <text>S-sulfanyl-L-cysteinyl-[protein] + uridine(34) in tRNA + AH2 + ATP = 2-thiouridine(34) in tRNA + L-cysteinyl-[protein] + A + AMP + diphosphate + H(+)</text>
        <dbReference type="Rhea" id="RHEA:47032"/>
        <dbReference type="Rhea" id="RHEA-COMP:10131"/>
        <dbReference type="Rhea" id="RHEA-COMP:11726"/>
        <dbReference type="Rhea" id="RHEA-COMP:11727"/>
        <dbReference type="Rhea" id="RHEA-COMP:11728"/>
        <dbReference type="ChEBI" id="CHEBI:13193"/>
        <dbReference type="ChEBI" id="CHEBI:15378"/>
        <dbReference type="ChEBI" id="CHEBI:17499"/>
        <dbReference type="ChEBI" id="CHEBI:29950"/>
        <dbReference type="ChEBI" id="CHEBI:30616"/>
        <dbReference type="ChEBI" id="CHEBI:33019"/>
        <dbReference type="ChEBI" id="CHEBI:61963"/>
        <dbReference type="ChEBI" id="CHEBI:65315"/>
        <dbReference type="ChEBI" id="CHEBI:87170"/>
        <dbReference type="ChEBI" id="CHEBI:456215"/>
        <dbReference type="EC" id="2.8.1.13"/>
    </reaction>
</comment>
<comment type="subcellular location">
    <subcellularLocation>
        <location evidence="1">Cytoplasm</location>
    </subcellularLocation>
</comment>
<comment type="similarity">
    <text evidence="1">Belongs to the MnmA/TRMU family.</text>
</comment>
<comment type="sequence caution" evidence="2">
    <conflict type="erroneous initiation">
        <sequence resource="EMBL-CDS" id="AAX87231"/>
    </conflict>
</comment>